<reference key="1">
    <citation type="journal article" date="2002" name="Nature">
        <title>Sequence and analysis of chromosome 2 of Dictyostelium discoideum.</title>
        <authorList>
            <person name="Gloeckner G."/>
            <person name="Eichinger L."/>
            <person name="Szafranski K."/>
            <person name="Pachebat J.A."/>
            <person name="Bankier A.T."/>
            <person name="Dear P.H."/>
            <person name="Lehmann R."/>
            <person name="Baumgart C."/>
            <person name="Parra G."/>
            <person name="Abril J.F."/>
            <person name="Guigo R."/>
            <person name="Kumpf K."/>
            <person name="Tunggal B."/>
            <person name="Cox E.C."/>
            <person name="Quail M.A."/>
            <person name="Platzer M."/>
            <person name="Rosenthal A."/>
            <person name="Noegel A.A."/>
        </authorList>
    </citation>
    <scope>NUCLEOTIDE SEQUENCE [LARGE SCALE GENOMIC DNA]</scope>
    <source>
        <strain>AX4</strain>
    </source>
</reference>
<reference key="2">
    <citation type="journal article" date="2005" name="Nature">
        <title>The genome of the social amoeba Dictyostelium discoideum.</title>
        <authorList>
            <person name="Eichinger L."/>
            <person name="Pachebat J.A."/>
            <person name="Gloeckner G."/>
            <person name="Rajandream M.A."/>
            <person name="Sucgang R."/>
            <person name="Berriman M."/>
            <person name="Song J."/>
            <person name="Olsen R."/>
            <person name="Szafranski K."/>
            <person name="Xu Q."/>
            <person name="Tunggal B."/>
            <person name="Kummerfeld S."/>
            <person name="Madera M."/>
            <person name="Konfortov B.A."/>
            <person name="Rivero F."/>
            <person name="Bankier A.T."/>
            <person name="Lehmann R."/>
            <person name="Hamlin N."/>
            <person name="Davies R."/>
            <person name="Gaudet P."/>
            <person name="Fey P."/>
            <person name="Pilcher K."/>
            <person name="Chen G."/>
            <person name="Saunders D."/>
            <person name="Sodergren E.J."/>
            <person name="Davis P."/>
            <person name="Kerhornou A."/>
            <person name="Nie X."/>
            <person name="Hall N."/>
            <person name="Anjard C."/>
            <person name="Hemphill L."/>
            <person name="Bason N."/>
            <person name="Farbrother P."/>
            <person name="Desany B."/>
            <person name="Just E."/>
            <person name="Morio T."/>
            <person name="Rost R."/>
            <person name="Churcher C.M."/>
            <person name="Cooper J."/>
            <person name="Haydock S."/>
            <person name="van Driessche N."/>
            <person name="Cronin A."/>
            <person name="Goodhead I."/>
            <person name="Muzny D.M."/>
            <person name="Mourier T."/>
            <person name="Pain A."/>
            <person name="Lu M."/>
            <person name="Harper D."/>
            <person name="Lindsay R."/>
            <person name="Hauser H."/>
            <person name="James K.D."/>
            <person name="Quiles M."/>
            <person name="Madan Babu M."/>
            <person name="Saito T."/>
            <person name="Buchrieser C."/>
            <person name="Wardroper A."/>
            <person name="Felder M."/>
            <person name="Thangavelu M."/>
            <person name="Johnson D."/>
            <person name="Knights A."/>
            <person name="Loulseged H."/>
            <person name="Mungall K.L."/>
            <person name="Oliver K."/>
            <person name="Price C."/>
            <person name="Quail M.A."/>
            <person name="Urushihara H."/>
            <person name="Hernandez J."/>
            <person name="Rabbinowitsch E."/>
            <person name="Steffen D."/>
            <person name="Sanders M."/>
            <person name="Ma J."/>
            <person name="Kohara Y."/>
            <person name="Sharp S."/>
            <person name="Simmonds M.N."/>
            <person name="Spiegler S."/>
            <person name="Tivey A."/>
            <person name="Sugano S."/>
            <person name="White B."/>
            <person name="Walker D."/>
            <person name="Woodward J.R."/>
            <person name="Winckler T."/>
            <person name="Tanaka Y."/>
            <person name="Shaulsky G."/>
            <person name="Schleicher M."/>
            <person name="Weinstock G.M."/>
            <person name="Rosenthal A."/>
            <person name="Cox E.C."/>
            <person name="Chisholm R.L."/>
            <person name="Gibbs R.A."/>
            <person name="Loomis W.F."/>
            <person name="Platzer M."/>
            <person name="Kay R.R."/>
            <person name="Williams J.G."/>
            <person name="Dear P.H."/>
            <person name="Noegel A.A."/>
            <person name="Barrell B.G."/>
            <person name="Kuspa A."/>
        </authorList>
    </citation>
    <scope>NUCLEOTIDE SEQUENCE [LARGE SCALE GENOMIC DNA]</scope>
    <source>
        <strain>AX4</strain>
    </source>
</reference>
<reference key="3">
    <citation type="journal article" date="2007" name="Biochem. Biophys. Res. Commun.">
        <title>Dictyostelium gnt15 encodes a protein with similarity to LARGE and plays an essential role in development.</title>
        <authorList>
            <person name="Pang T.L."/>
            <person name="Wu C.J."/>
            <person name="Chen P.A."/>
            <person name="Weng Y.L."/>
            <person name="Chen M.Y."/>
        </authorList>
    </citation>
    <scope>DEVELOPMENTAL STAGE</scope>
    <scope>DISRUPTION PHENOTYPE</scope>
    <scope>FUNCTION</scope>
</reference>
<name>GNT15_DICDI</name>
<sequence>MSNFYNNNPRRNTFRLTERIKKKPYQTLIVFILIFLFLYVFGPFGEKKSNNNNNNHPVSKTSSFTESLYTKFQTETFAYRANGDLKKYDISIITQFTVDRFDRIAMMADKWRAPISAAVYITSFKDIDEVFKLVRNSFAVTEFVDLHFLFANKTRYPVNNLRNLALRNARTEWCLLLDVDFISPLGMYDYLHSTLEKLDTSNNNNNNNNNNNNNNNNNNNNNNNNNNNNNNNENNDNDNGNNNNNNDNEKNFKKKQEDLKIDPNDFEGDLKAIEKLKRNGEKLYVKNLKKVLDGSENNLGKNINFNNNNNDNNNKDDGGGGGYYLNSDNSNINNNNKIAFVIPSFSSSISRFDFPDNKKDLLDFIKQDLIKEINSGVCPKCHGPTNYSRWYLSSEPYLVQYKWIYEPFLLYNRSQIHDYDERLKGYGFDKNSHTFGMAAAGFDFVVLPDAWIIHMNHVSKPWEGADTFNEQMFDCLSIVCESILPDAKSKNGYDPNAKLFNEPLKNNDNCLTREHW</sequence>
<feature type="chain" id="PRO_0000393410" description="Glycosyltransferase-like protein gnt15">
    <location>
        <begin position="1"/>
        <end position="516"/>
    </location>
</feature>
<feature type="topological domain" description="Cytoplasmic" evidence="1">
    <location>
        <begin position="1"/>
        <end position="24"/>
    </location>
</feature>
<feature type="transmembrane region" description="Helical; Signal-anchor for type II membrane protein" evidence="1">
    <location>
        <begin position="25"/>
        <end position="45"/>
    </location>
</feature>
<feature type="topological domain" description="Extracellular" evidence="1">
    <location>
        <begin position="46"/>
        <end position="516"/>
    </location>
</feature>
<feature type="region of interest" description="Disordered" evidence="2">
    <location>
        <begin position="199"/>
        <end position="250"/>
    </location>
</feature>
<feature type="compositionally biased region" description="Low complexity" evidence="2">
    <location>
        <begin position="202"/>
        <end position="246"/>
    </location>
</feature>
<feature type="glycosylation site" description="N-linked (GlcNAc...) asparagine" evidence="1">
    <location>
        <position position="152"/>
    </location>
</feature>
<feature type="glycosylation site" description="N-linked (GlcNAc...) asparagine" evidence="1">
    <location>
        <position position="386"/>
    </location>
</feature>
<feature type="glycosylation site" description="N-linked (GlcNAc...) asparagine" evidence="1">
    <location>
        <position position="412"/>
    </location>
</feature>
<proteinExistence type="evidence at transcript level"/>
<protein>
    <recommendedName>
        <fullName>Glycosyltransferase-like protein gnt15</fullName>
    </recommendedName>
</protein>
<organism>
    <name type="scientific">Dictyostelium discoideum</name>
    <name type="common">Social amoeba</name>
    <dbReference type="NCBI Taxonomy" id="44689"/>
    <lineage>
        <taxon>Eukaryota</taxon>
        <taxon>Amoebozoa</taxon>
        <taxon>Evosea</taxon>
        <taxon>Eumycetozoa</taxon>
        <taxon>Dictyostelia</taxon>
        <taxon>Dictyosteliales</taxon>
        <taxon>Dictyosteliaceae</taxon>
        <taxon>Dictyostelium</taxon>
    </lineage>
</organism>
<accession>Q555X4</accession>
<dbReference type="EMBL" id="AAFI02000012">
    <property type="protein sequence ID" value="EAL70263.1"/>
    <property type="molecule type" value="Genomic_DNA"/>
</dbReference>
<dbReference type="RefSeq" id="XP_643936.1">
    <property type="nucleotide sequence ID" value="XM_638844.1"/>
</dbReference>
<dbReference type="SMR" id="Q555X4"/>
<dbReference type="GlyCosmos" id="Q555X4">
    <property type="glycosylation" value="3 sites, No reported glycans"/>
</dbReference>
<dbReference type="GlyGen" id="Q555X4">
    <property type="glycosylation" value="3 sites"/>
</dbReference>
<dbReference type="PaxDb" id="44689-DDB0231849"/>
<dbReference type="EnsemblProtists" id="EAL70263">
    <property type="protein sequence ID" value="EAL70263"/>
    <property type="gene ID" value="DDB_G0274741"/>
</dbReference>
<dbReference type="GeneID" id="8619363"/>
<dbReference type="KEGG" id="ddi:DDB_G0274741"/>
<dbReference type="dictyBase" id="DDB_G0274741">
    <property type="gene designation" value="gnt15"/>
</dbReference>
<dbReference type="VEuPathDB" id="AmoebaDB:DDB_G0274741"/>
<dbReference type="eggNOG" id="KOG3765">
    <property type="taxonomic scope" value="Eukaryota"/>
</dbReference>
<dbReference type="HOGENOM" id="CLU_528327_0_0_1"/>
<dbReference type="InParanoid" id="Q555X4"/>
<dbReference type="PhylomeDB" id="Q555X4"/>
<dbReference type="PRO" id="PR:Q555X4"/>
<dbReference type="Proteomes" id="UP000002195">
    <property type="component" value="Chromosome 2"/>
</dbReference>
<dbReference type="GO" id="GO:0016020">
    <property type="term" value="C:membrane"/>
    <property type="evidence" value="ECO:0007669"/>
    <property type="project" value="UniProtKB-SubCell"/>
</dbReference>
<dbReference type="GO" id="GO:0015020">
    <property type="term" value="F:glucuronosyltransferase activity"/>
    <property type="evidence" value="ECO:0000318"/>
    <property type="project" value="GO_Central"/>
</dbReference>
<dbReference type="GO" id="GO:0042285">
    <property type="term" value="F:xylosyltransferase activity"/>
    <property type="evidence" value="ECO:0000318"/>
    <property type="project" value="GO_Central"/>
</dbReference>
<dbReference type="GO" id="GO:0016338">
    <property type="term" value="P:calcium-independent cell-cell adhesion via plasma membrane cell-adhesion molecules"/>
    <property type="evidence" value="ECO:0000315"/>
    <property type="project" value="dictyBase"/>
</dbReference>
<dbReference type="GO" id="GO:0035269">
    <property type="term" value="P:protein O-linked mannosylation"/>
    <property type="evidence" value="ECO:0000318"/>
    <property type="project" value="GO_Central"/>
</dbReference>
<dbReference type="GO" id="GO:0030587">
    <property type="term" value="P:sorocarp development"/>
    <property type="evidence" value="ECO:0000315"/>
    <property type="project" value="dictyBase"/>
</dbReference>
<dbReference type="Gene3D" id="3.90.550.10">
    <property type="entry name" value="Spore Coat Polysaccharide Biosynthesis Protein SpsA, Chain A"/>
    <property type="match status" value="1"/>
</dbReference>
<dbReference type="InterPro" id="IPR029044">
    <property type="entry name" value="Nucleotide-diphossugar_trans"/>
</dbReference>
<dbReference type="InterPro" id="IPR051292">
    <property type="entry name" value="Xyl/GlcA_transferase"/>
</dbReference>
<dbReference type="PANTHER" id="PTHR12270:SF50">
    <property type="entry name" value="GLYCOSYLTRANSFERASE-LIKE PROTEIN GNT12-RELATED"/>
    <property type="match status" value="1"/>
</dbReference>
<dbReference type="PANTHER" id="PTHR12270">
    <property type="entry name" value="GLYCOSYLTRANSFERASE-RELATED"/>
    <property type="match status" value="1"/>
</dbReference>
<dbReference type="Pfam" id="PF13896">
    <property type="entry name" value="Glyco_transf_49"/>
    <property type="match status" value="2"/>
</dbReference>
<gene>
    <name type="primary">gnt15</name>
    <name type="ORF">DDB_G0274741</name>
</gene>
<comment type="function">
    <text evidence="3">May have a role in modulating cell adhesion and glycosylation. Essential for development.</text>
</comment>
<comment type="subcellular location">
    <subcellularLocation>
        <location evidence="4">Membrane</location>
        <topology evidence="4">Single-pass type II membrane protein</topology>
    </subcellularLocation>
</comment>
<comment type="developmental stage">
    <text evidence="3">Highest expression at vegetative and pre-aggregation stages.</text>
</comment>
<comment type="disruption phenotype">
    <text evidence="3">Slow growth, aberrant morphology and development. Produces a severe defect in spore formation. Cells are more adhesive. Alterations in glycosylation on membrane proteins and decreased gp130 and gp150 levels are observed.</text>
</comment>
<comment type="similarity">
    <text evidence="4">Belongs to the glycosyltransferase 8 family. Highly divergent.</text>
</comment>
<keyword id="KW-0325">Glycoprotein</keyword>
<keyword id="KW-0472">Membrane</keyword>
<keyword id="KW-1185">Reference proteome</keyword>
<keyword id="KW-0735">Signal-anchor</keyword>
<keyword id="KW-0812">Transmembrane</keyword>
<keyword id="KW-1133">Transmembrane helix</keyword>
<evidence type="ECO:0000255" key="1"/>
<evidence type="ECO:0000256" key="2">
    <source>
        <dbReference type="SAM" id="MobiDB-lite"/>
    </source>
</evidence>
<evidence type="ECO:0000269" key="3">
    <source>
    </source>
</evidence>
<evidence type="ECO:0000305" key="4"/>